<organism>
    <name type="scientific">Macaca fascicularis</name>
    <name type="common">Crab-eating macaque</name>
    <name type="synonym">Cynomolgus monkey</name>
    <dbReference type="NCBI Taxonomy" id="9541"/>
    <lineage>
        <taxon>Eukaryota</taxon>
        <taxon>Metazoa</taxon>
        <taxon>Chordata</taxon>
        <taxon>Craniata</taxon>
        <taxon>Vertebrata</taxon>
        <taxon>Euteleostomi</taxon>
        <taxon>Mammalia</taxon>
        <taxon>Eutheria</taxon>
        <taxon>Euarchontoglires</taxon>
        <taxon>Primates</taxon>
        <taxon>Haplorrhini</taxon>
        <taxon>Catarrhini</taxon>
        <taxon>Cercopithecidae</taxon>
        <taxon>Cercopithecinae</taxon>
        <taxon>Macaca</taxon>
    </lineage>
</organism>
<gene>
    <name type="primary">PSMC2</name>
    <name type="ORF">QnpA-16482</name>
</gene>
<sequence length="433" mass="48634">MPDYLGADQRKTKEDEKDDKPIRALDEGDIALLKTYGQSTYSRQIKQVEDDIQQLLKKINELTGIKESDTGLAPPALWDLAADKQTLQSEQPLQVARCTKIINADSEDPKYIINVKQFAKFVVDLSDQVAPTDIEEGMRVGVDRNKYQIHIPLPPKIDPTVTMMQVEEKPDVTYSDVGGCKEQIEKLREVVETPLLHPERFVNLGIEPPKGVLLFGPPGTGKTLCARAVANRTDACFIRVIGSELVQKYVGEGARMVRELFEMARTKKACLIFFDEIDAIGGARFDDGAGGDNEVQRTMLELINQLDGFDPRGNIKVLMATNRPDTLDPALMRPGRLDRKIEFSLPDLEGRTHIFKIHARSMSVERDIRFELLARLCPNSTGAEIRSVCTEAGMFAIRARRKIATEKDFLEAVNKVIKSYAKFSATPRYMTYN</sequence>
<name>PRS7_MACFA</name>
<comment type="function">
    <text evidence="1">Component of the 26S proteasome, a multiprotein complex involved in the ATP-dependent degradation of ubiquitinated proteins. This complex plays a key role in the maintenance of protein homeostasis by removing misfolded or damaged proteins, which could impair cellular functions, and by removing proteins whose functions are no longer required. Therefore, the proteasome participates in numerous cellular processes, including cell cycle progression, apoptosis, or DNA damage repair. PSMC2 belongs to the heterohexameric ring of AAA (ATPases associated with diverse cellular activities) proteins that unfolds ubiquitinated target proteins that are concurrently translocated into a proteolytic chamber and degraded into peptides.</text>
</comment>
<comment type="subunit">
    <text evidence="1">Component of the 19S proteasome regulatory particle complex. The 26S proteasome consists of a 20S core particle (CP) and two 19S regulatory subunits (RP). The regulatory particle is made of a lid composed of 9 subunits, a base containing 6 ATPases including PSMC2 and few additional components. Interacts with NDC80/HEC; this interaction is detected only during M phase. Interacts and SQSTM1. Interacts with PAAF1. Directly interacts with TRIM5.</text>
</comment>
<comment type="subcellular location">
    <subcellularLocation>
        <location evidence="1">Cytoplasm</location>
    </subcellularLocation>
    <subcellularLocation>
        <location evidence="1">Nucleus</location>
    </subcellularLocation>
    <text evidence="1">Colocalizes with TRIM5 in cytoplasmic bodies.</text>
</comment>
<comment type="PTM">
    <text evidence="1">Monoubiquitinated by RNF181.</text>
</comment>
<comment type="PTM">
    <text evidence="1">Phosphorylated. Dephosphorylated by UBLCP1 which impairs PSMC2 ATPase activity and disrupts 26S proteasome assembly.</text>
</comment>
<comment type="similarity">
    <text evidence="4">Belongs to the AAA ATPase family.</text>
</comment>
<proteinExistence type="evidence at transcript level"/>
<reference key="1">
    <citation type="submission" date="2005-06" db="EMBL/GenBank/DDBJ databases">
        <title>DNA sequences of macaque genes expressed in brain or testis and its evolutionary implications.</title>
        <authorList>
            <consortium name="International consortium for macaque cDNA sequencing and analysis"/>
        </authorList>
    </citation>
    <scope>NUCLEOTIDE SEQUENCE [LARGE SCALE MRNA]</scope>
    <source>
        <tissue>Parietal cortex</tissue>
    </source>
</reference>
<protein>
    <recommendedName>
        <fullName>26S proteasome regulatory subunit 7</fullName>
    </recommendedName>
    <alternativeName>
        <fullName>26S proteasome AAA-ATPase subunit RPT1</fullName>
    </alternativeName>
    <alternativeName>
        <fullName>Proteasome 26S subunit ATPase 2</fullName>
    </alternativeName>
</protein>
<feature type="chain" id="PRO_0000249767" description="26S proteasome regulatory subunit 7">
    <location>
        <begin position="1"/>
        <end position="433"/>
    </location>
</feature>
<feature type="region of interest" description="Disordered" evidence="3">
    <location>
        <begin position="1"/>
        <end position="22"/>
    </location>
</feature>
<feature type="compositionally biased region" description="Basic and acidic residues" evidence="3">
    <location>
        <begin position="8"/>
        <end position="22"/>
    </location>
</feature>
<feature type="binding site" evidence="2">
    <location>
        <begin position="216"/>
        <end position="223"/>
    </location>
    <ligand>
        <name>ATP</name>
        <dbReference type="ChEBI" id="CHEBI:30616"/>
    </ligand>
</feature>
<feature type="modified residue" description="N6-acetyllysine" evidence="1">
    <location>
        <position position="116"/>
    </location>
</feature>
<feature type="modified residue" description="N6-acetyllysine" evidence="1">
    <location>
        <position position="422"/>
    </location>
</feature>
<accession>Q4R4R0</accession>
<dbReference type="EMBL" id="AB169834">
    <property type="protein sequence ID" value="BAE01915.1"/>
    <property type="molecule type" value="mRNA"/>
</dbReference>
<dbReference type="RefSeq" id="XP_005550488.1">
    <property type="nucleotide sequence ID" value="XM_005550431.3"/>
</dbReference>
<dbReference type="SMR" id="Q4R4R0"/>
<dbReference type="STRING" id="9541.ENSMFAP00000030729"/>
<dbReference type="Ensembl" id="ENSMFAT00000004936.2">
    <property type="protein sequence ID" value="ENSMFAP00000030729.1"/>
    <property type="gene ID" value="ENSMFAG00000042533.2"/>
</dbReference>
<dbReference type="GeneID" id="101867279"/>
<dbReference type="KEGG" id="mcf:101867279"/>
<dbReference type="CTD" id="5701"/>
<dbReference type="VEuPathDB" id="HostDB:ENSMFAG00000042533"/>
<dbReference type="eggNOG" id="KOG0729">
    <property type="taxonomic scope" value="Eukaryota"/>
</dbReference>
<dbReference type="GeneTree" id="ENSGT01020000230346"/>
<dbReference type="OMA" id="RSKYHIE"/>
<dbReference type="OrthoDB" id="6534at314294"/>
<dbReference type="Proteomes" id="UP000233100">
    <property type="component" value="Chromosome 3"/>
</dbReference>
<dbReference type="Bgee" id="ENSMFAG00000042533">
    <property type="expression patterns" value="Expressed in skeletal muscle tissue and 13 other cell types or tissues"/>
</dbReference>
<dbReference type="GO" id="GO:0005829">
    <property type="term" value="C:cytosol"/>
    <property type="evidence" value="ECO:0007669"/>
    <property type="project" value="Ensembl"/>
</dbReference>
<dbReference type="GO" id="GO:0005634">
    <property type="term" value="C:nucleus"/>
    <property type="evidence" value="ECO:0007669"/>
    <property type="project" value="UniProtKB-SubCell"/>
</dbReference>
<dbReference type="GO" id="GO:0000932">
    <property type="term" value="C:P-body"/>
    <property type="evidence" value="ECO:0000250"/>
    <property type="project" value="UniProtKB"/>
</dbReference>
<dbReference type="GO" id="GO:0022624">
    <property type="term" value="C:proteasome accessory complex"/>
    <property type="evidence" value="ECO:0000250"/>
    <property type="project" value="UniProtKB"/>
</dbReference>
<dbReference type="GO" id="GO:0000502">
    <property type="term" value="C:proteasome complex"/>
    <property type="evidence" value="ECO:0000250"/>
    <property type="project" value="UniProtKB"/>
</dbReference>
<dbReference type="GO" id="GO:0005524">
    <property type="term" value="F:ATP binding"/>
    <property type="evidence" value="ECO:0007669"/>
    <property type="project" value="UniProtKB-KW"/>
</dbReference>
<dbReference type="GO" id="GO:0016887">
    <property type="term" value="F:ATP hydrolysis activity"/>
    <property type="evidence" value="ECO:0007669"/>
    <property type="project" value="InterPro"/>
</dbReference>
<dbReference type="GO" id="GO:0036402">
    <property type="term" value="F:proteasome-activating activity"/>
    <property type="evidence" value="ECO:0000250"/>
    <property type="project" value="UniProtKB"/>
</dbReference>
<dbReference type="GO" id="GO:0006511">
    <property type="term" value="P:ubiquitin-dependent protein catabolic process"/>
    <property type="evidence" value="ECO:0000250"/>
    <property type="project" value="UniProtKB"/>
</dbReference>
<dbReference type="CDD" id="cd19502">
    <property type="entry name" value="RecA-like_PAN_like"/>
    <property type="match status" value="1"/>
</dbReference>
<dbReference type="FunFam" id="1.10.8.60:FF:000005">
    <property type="entry name" value="26S protease regulatory subunit 7"/>
    <property type="match status" value="1"/>
</dbReference>
<dbReference type="FunFam" id="2.40.50.140:FF:000075">
    <property type="entry name" value="26S protease regulatory subunit 7"/>
    <property type="match status" value="1"/>
</dbReference>
<dbReference type="FunFam" id="3.40.50.300:FF:000027">
    <property type="entry name" value="26S protease regulatory subunit 7"/>
    <property type="match status" value="1"/>
</dbReference>
<dbReference type="Gene3D" id="1.10.8.60">
    <property type="match status" value="1"/>
</dbReference>
<dbReference type="Gene3D" id="2.40.50.140">
    <property type="entry name" value="Nucleic acid-binding proteins"/>
    <property type="match status" value="1"/>
</dbReference>
<dbReference type="Gene3D" id="3.40.50.300">
    <property type="entry name" value="P-loop containing nucleotide triphosphate hydrolases"/>
    <property type="match status" value="1"/>
</dbReference>
<dbReference type="InterPro" id="IPR050221">
    <property type="entry name" value="26S_Proteasome_ATPase"/>
</dbReference>
<dbReference type="InterPro" id="IPR003593">
    <property type="entry name" value="AAA+_ATPase"/>
</dbReference>
<dbReference type="InterPro" id="IPR041569">
    <property type="entry name" value="AAA_lid_3"/>
</dbReference>
<dbReference type="InterPro" id="IPR003959">
    <property type="entry name" value="ATPase_AAA_core"/>
</dbReference>
<dbReference type="InterPro" id="IPR003960">
    <property type="entry name" value="ATPase_AAA_CS"/>
</dbReference>
<dbReference type="InterPro" id="IPR012340">
    <property type="entry name" value="NA-bd_OB-fold"/>
</dbReference>
<dbReference type="InterPro" id="IPR027417">
    <property type="entry name" value="P-loop_NTPase"/>
</dbReference>
<dbReference type="InterPro" id="IPR048723">
    <property type="entry name" value="PRS7-like_OB"/>
</dbReference>
<dbReference type="PANTHER" id="PTHR23073">
    <property type="entry name" value="26S PROTEASOME REGULATORY SUBUNIT"/>
    <property type="match status" value="1"/>
</dbReference>
<dbReference type="Pfam" id="PF00004">
    <property type="entry name" value="AAA"/>
    <property type="match status" value="1"/>
</dbReference>
<dbReference type="Pfam" id="PF17862">
    <property type="entry name" value="AAA_lid_3"/>
    <property type="match status" value="1"/>
</dbReference>
<dbReference type="Pfam" id="PF21236">
    <property type="entry name" value="PRS7_OB"/>
    <property type="match status" value="1"/>
</dbReference>
<dbReference type="SMART" id="SM00382">
    <property type="entry name" value="AAA"/>
    <property type="match status" value="1"/>
</dbReference>
<dbReference type="SUPFAM" id="SSF52540">
    <property type="entry name" value="P-loop containing nucleoside triphosphate hydrolases"/>
    <property type="match status" value="1"/>
</dbReference>
<dbReference type="PROSITE" id="PS00674">
    <property type="entry name" value="AAA"/>
    <property type="match status" value="1"/>
</dbReference>
<keyword id="KW-0007">Acetylation</keyword>
<keyword id="KW-0067">ATP-binding</keyword>
<keyword id="KW-0963">Cytoplasm</keyword>
<keyword id="KW-0547">Nucleotide-binding</keyword>
<keyword id="KW-0539">Nucleus</keyword>
<keyword id="KW-0597">Phosphoprotein</keyword>
<keyword id="KW-0647">Proteasome</keyword>
<keyword id="KW-1185">Reference proteome</keyword>
<keyword id="KW-0832">Ubl conjugation</keyword>
<evidence type="ECO:0000250" key="1">
    <source>
        <dbReference type="UniProtKB" id="P35998"/>
    </source>
</evidence>
<evidence type="ECO:0000255" key="2"/>
<evidence type="ECO:0000256" key="3">
    <source>
        <dbReference type="SAM" id="MobiDB-lite"/>
    </source>
</evidence>
<evidence type="ECO:0000305" key="4"/>